<name>ERF80_ARATH</name>
<protein>
    <recommendedName>
        <fullName>Ethylene-responsive transcription factor 9</fullName>
        <shortName>AtERF9</shortName>
    </recommendedName>
    <alternativeName>
        <fullName>Ethylene-responsive element-binding factor 9</fullName>
        <shortName>EREBP-9</shortName>
    </alternativeName>
</protein>
<reference key="1">
    <citation type="journal article" date="2001" name="Plant Cell">
        <title>Repression domains of class II ERF transcriptional repressors share an essential motif for active repression.</title>
        <authorList>
            <person name="Ohta M."/>
            <person name="Matsui K."/>
            <person name="Hiratsu K."/>
            <person name="Shinshi H."/>
            <person name="Ohme-Takagi M."/>
        </authorList>
    </citation>
    <scope>NUCLEOTIDE SEQUENCE [GENOMIC DNA]</scope>
    <scope>FUNCTION</scope>
</reference>
<reference key="2">
    <citation type="submission" date="2004-02" db="EMBL/GenBank/DDBJ databases">
        <title>Molecular cloning, expression, phylogenetic and functional characterization of the Arabidopsis AP2/EREBP transcription factor family.</title>
        <authorList>
            <person name="Pan Y."/>
            <person name="Gong W."/>
            <person name="Liu D."/>
            <person name="Fu Q."/>
            <person name="Mei W.-Q."/>
            <person name="Song W.-Q."/>
            <person name="Ma L.-G."/>
            <person name="Luo J.-C."/>
            <person name="Deng X.-W."/>
            <person name="Zhu Y.-X."/>
        </authorList>
    </citation>
    <scope>NUCLEOTIDE SEQUENCE [MRNA]</scope>
</reference>
<reference key="3">
    <citation type="journal article" date="1997" name="DNA Res.">
        <title>Structural analysis of Arabidopsis thaliana chromosome 5. I. Sequence features of the 1.6 Mb regions covered by twenty physically assigned P1 clones.</title>
        <authorList>
            <person name="Sato S."/>
            <person name="Kotani H."/>
            <person name="Nakamura Y."/>
            <person name="Kaneko T."/>
            <person name="Asamizu E."/>
            <person name="Fukami M."/>
            <person name="Miyajima N."/>
            <person name="Tabata S."/>
        </authorList>
    </citation>
    <scope>NUCLEOTIDE SEQUENCE [LARGE SCALE GENOMIC DNA]</scope>
    <source>
        <strain>cv. Columbia</strain>
    </source>
</reference>
<reference key="4">
    <citation type="journal article" date="2017" name="Plant J.">
        <title>Araport11: a complete reannotation of the Arabidopsis thaliana reference genome.</title>
        <authorList>
            <person name="Cheng C.Y."/>
            <person name="Krishnakumar V."/>
            <person name="Chan A.P."/>
            <person name="Thibaud-Nissen F."/>
            <person name="Schobel S."/>
            <person name="Town C.D."/>
        </authorList>
    </citation>
    <scope>GENOME REANNOTATION</scope>
    <source>
        <strain>cv. Columbia</strain>
    </source>
</reference>
<reference key="5">
    <citation type="submission" date="2004-11" db="EMBL/GenBank/DDBJ databases">
        <title>Arabidopsis ORF clones.</title>
        <authorList>
            <person name="Cheuk R.F."/>
            <person name="Chen H."/>
            <person name="Kim C.J."/>
            <person name="Shinn P."/>
            <person name="Ecker J.R."/>
        </authorList>
    </citation>
    <scope>NUCLEOTIDE SEQUENCE [LARGE SCALE MRNA]</scope>
    <source>
        <strain>cv. Columbia</strain>
    </source>
</reference>
<reference key="6">
    <citation type="journal article" date="2006" name="Plant Physiol.">
        <title>Genome-wide analysis of the ERF gene family in Arabidopsis and rice.</title>
        <authorList>
            <person name="Nakano T."/>
            <person name="Suzuki K."/>
            <person name="Fujimura T."/>
            <person name="Shinshi H."/>
        </authorList>
    </citation>
    <scope>GENE FAMILY</scope>
    <scope>NOMENCLATURE</scope>
</reference>
<comment type="function">
    <text evidence="1 4">Involved in the regulation of gene expression by stress factors and by components of stress signal transduction pathways. Transcription factor that binds to the GCC-box pathogenesis-related promoter element. Acts as a transcriptional inhibitor and may regulate other AtERFs (By similarity).</text>
</comment>
<comment type="interaction">
    <interactant intactId="EBI-4431933">
        <id>Q9FE67</id>
    </interactant>
    <interactant intactId="EBI-25522986">
        <id>Q9FIW5</id>
        <label>ANAC094</label>
    </interactant>
    <organismsDiffer>false</organismsDiffer>
    <experiments>3</experiments>
</comment>
<comment type="interaction">
    <interactant intactId="EBI-4431933">
        <id>Q9FE67</id>
    </interactant>
    <interactant intactId="EBI-25511859">
        <id>Q9SKT1</id>
        <label>ERF053</label>
    </interactant>
    <organismsDiffer>false</organismsDiffer>
    <experiments>3</experiments>
</comment>
<comment type="interaction">
    <interactant intactId="EBI-4431933">
        <id>Q9FE67</id>
    </interactant>
    <interactant intactId="EBI-4424877">
        <id>Q9S7W5</id>
        <label>TCP13</label>
    </interactant>
    <organismsDiffer>false</organismsDiffer>
    <experiments>3</experiments>
</comment>
<comment type="interaction">
    <interactant intactId="EBI-4431933">
        <id>Q9FE67</id>
    </interactant>
    <interactant intactId="EBI-4426144">
        <id>Q9C9L2</id>
        <label>TCP15</label>
    </interactant>
    <organismsDiffer>false</organismsDiffer>
    <experiments>3</experiments>
</comment>
<comment type="interaction">
    <interactant intactId="EBI-4431933">
        <id>Q9FE67</id>
    </interactant>
    <interactant intactId="EBI-15198627">
        <id>Q9M1U4</id>
        <label>TCP16</label>
    </interactant>
    <organismsDiffer>false</organismsDiffer>
    <experiments>3</experiments>
</comment>
<comment type="interaction">
    <interactant intactId="EBI-4431933">
        <id>Q9FE67</id>
    </interactant>
    <interactant intactId="EBI-25522447">
        <id>Q9MAH8</id>
        <label>TCP3</label>
    </interactant>
    <organismsDiffer>false</organismsDiffer>
    <experiments>3</experiments>
</comment>
<comment type="interaction">
    <interactant intactId="EBI-4431933">
        <id>Q9FE67</id>
    </interactant>
    <interactant intactId="EBI-4424568">
        <id>Q9LVG2</id>
        <label>TOE2</label>
    </interactant>
    <organismsDiffer>false</organismsDiffer>
    <experiments>3</experiments>
</comment>
<comment type="interaction">
    <interactant intactId="EBI-4431933">
        <id>Q9FE67</id>
    </interactant>
    <interactant intactId="EBI-1806244">
        <id>O64722</id>
        <label>ZHD3</label>
    </interactant>
    <organismsDiffer>false</organismsDiffer>
    <experiments>3</experiments>
</comment>
<comment type="subcellular location">
    <subcellularLocation>
        <location evidence="5">Nucleus</location>
    </subcellularLocation>
</comment>
<comment type="domain">
    <text evidence="1">Contains a slightly degenerated ERF-associated amphiphilic repression (EAR) motif, which may be involved in the activity of transcriptional repression.</text>
</comment>
<comment type="similarity">
    <text evidence="5">Belongs to the AP2/ERF transcription factor family. ERF subfamily.</text>
</comment>
<sequence>MAPRQANGRSIAVSEGGGGKTMTMTTMRKEVHFRGVRKRPWGRYAAEIRDPGKKTRVWLGTFDTAEEAARAYDTAAREFRGSKAKTNFPLPGESTTVNDGGENDSYVNRTTVTTAREMTRQRFPFACHRERKVVGGYASAGFFFDPSRAASLRAELSRVCPVRFDPVNIELSIGIRETVKVEPRRELNLDLNLAPPVVDV</sequence>
<gene>
    <name type="primary">ERF9</name>
    <name type="synonym">ERF-9</name>
    <name type="synonym">ERF080</name>
    <name type="ordered locus">At5g44210</name>
    <name type="ORF">MLN1.14</name>
</gene>
<keyword id="KW-0238">DNA-binding</keyword>
<keyword id="KW-0936">Ethylene signaling pathway</keyword>
<keyword id="KW-0539">Nucleus</keyword>
<keyword id="KW-0611">Plant defense</keyword>
<keyword id="KW-1185">Reference proteome</keyword>
<keyword id="KW-0678">Repressor</keyword>
<keyword id="KW-0804">Transcription</keyword>
<keyword id="KW-0805">Transcription regulation</keyword>
<proteinExistence type="evidence at protein level"/>
<organism>
    <name type="scientific">Arabidopsis thaliana</name>
    <name type="common">Mouse-ear cress</name>
    <dbReference type="NCBI Taxonomy" id="3702"/>
    <lineage>
        <taxon>Eukaryota</taxon>
        <taxon>Viridiplantae</taxon>
        <taxon>Streptophyta</taxon>
        <taxon>Embryophyta</taxon>
        <taxon>Tracheophyta</taxon>
        <taxon>Spermatophyta</taxon>
        <taxon>Magnoliopsida</taxon>
        <taxon>eudicotyledons</taxon>
        <taxon>Gunneridae</taxon>
        <taxon>Pentapetalae</taxon>
        <taxon>rosids</taxon>
        <taxon>malvids</taxon>
        <taxon>Brassicales</taxon>
        <taxon>Brassicaceae</taxon>
        <taxon>Camelineae</taxon>
        <taxon>Arabidopsis</taxon>
    </lineage>
</organism>
<evidence type="ECO:0000250" key="1"/>
<evidence type="ECO:0000255" key="2">
    <source>
        <dbReference type="PROSITE-ProRule" id="PRU00366"/>
    </source>
</evidence>
<evidence type="ECO:0000256" key="3">
    <source>
        <dbReference type="SAM" id="MobiDB-lite"/>
    </source>
</evidence>
<evidence type="ECO:0000269" key="4">
    <source>
    </source>
</evidence>
<evidence type="ECO:0000305" key="5"/>
<accession>Q9FE67</accession>
<feature type="chain" id="PRO_0000112559" description="Ethylene-responsive transcription factor 9">
    <location>
        <begin position="1"/>
        <end position="200"/>
    </location>
</feature>
<feature type="DNA-binding region" description="AP2/ERF" evidence="2">
    <location>
        <begin position="32"/>
        <end position="89"/>
    </location>
</feature>
<feature type="region of interest" description="Disordered" evidence="3">
    <location>
        <begin position="1"/>
        <end position="22"/>
    </location>
</feature>
<feature type="region of interest" description="Disordered" evidence="3">
    <location>
        <begin position="84"/>
        <end position="104"/>
    </location>
</feature>
<feature type="short sequence motif" description="EAR-like (transcriptional repression)">
    <location>
        <begin position="189"/>
        <end position="195"/>
    </location>
</feature>
<dbReference type="EMBL" id="AB047648">
    <property type="protein sequence ID" value="BAB18560.1"/>
    <property type="molecule type" value="Genomic_DNA"/>
</dbReference>
<dbReference type="EMBL" id="AY560856">
    <property type="protein sequence ID" value="AAT44923.1"/>
    <property type="molecule type" value="mRNA"/>
</dbReference>
<dbReference type="EMBL" id="AB005239">
    <property type="protein sequence ID" value="BAB10988.1"/>
    <property type="molecule type" value="Genomic_DNA"/>
</dbReference>
<dbReference type="EMBL" id="CP002688">
    <property type="protein sequence ID" value="AED95075.1"/>
    <property type="molecule type" value="Genomic_DNA"/>
</dbReference>
<dbReference type="EMBL" id="BT015876">
    <property type="protein sequence ID" value="AAU95412.1"/>
    <property type="molecule type" value="mRNA"/>
</dbReference>
<dbReference type="EMBL" id="BT020188">
    <property type="protein sequence ID" value="AAV43790.1"/>
    <property type="molecule type" value="mRNA"/>
</dbReference>
<dbReference type="RefSeq" id="NP_199234.1">
    <property type="nucleotide sequence ID" value="NM_123788.5"/>
</dbReference>
<dbReference type="SMR" id="Q9FE67"/>
<dbReference type="BioGRID" id="19694">
    <property type="interactions" value="13"/>
</dbReference>
<dbReference type="FunCoup" id="Q9FE67">
    <property type="interactions" value="4"/>
</dbReference>
<dbReference type="IntAct" id="Q9FE67">
    <property type="interactions" value="9"/>
</dbReference>
<dbReference type="STRING" id="3702.Q9FE67"/>
<dbReference type="PaxDb" id="3702-AT5G44210.1"/>
<dbReference type="ProteomicsDB" id="221869"/>
<dbReference type="EnsemblPlants" id="AT5G44210.1">
    <property type="protein sequence ID" value="AT5G44210.1"/>
    <property type="gene ID" value="AT5G44210"/>
</dbReference>
<dbReference type="GeneID" id="834444"/>
<dbReference type="Gramene" id="AT5G44210.1">
    <property type="protein sequence ID" value="AT5G44210.1"/>
    <property type="gene ID" value="AT5G44210"/>
</dbReference>
<dbReference type="KEGG" id="ath:AT5G44210"/>
<dbReference type="Araport" id="AT5G44210"/>
<dbReference type="TAIR" id="AT5G44210">
    <property type="gene designation" value="ERF9"/>
</dbReference>
<dbReference type="eggNOG" id="ENOG502RZGB">
    <property type="taxonomic scope" value="Eukaryota"/>
</dbReference>
<dbReference type="HOGENOM" id="CLU_042594_5_1_1"/>
<dbReference type="InParanoid" id="Q9FE67"/>
<dbReference type="OMA" id="FPFACHR"/>
<dbReference type="PhylomeDB" id="Q9FE67"/>
<dbReference type="PRO" id="PR:Q9FE67"/>
<dbReference type="Proteomes" id="UP000006548">
    <property type="component" value="Chromosome 5"/>
</dbReference>
<dbReference type="ExpressionAtlas" id="Q9FE67">
    <property type="expression patterns" value="baseline and differential"/>
</dbReference>
<dbReference type="GO" id="GO:0005634">
    <property type="term" value="C:nucleus"/>
    <property type="evidence" value="ECO:0007669"/>
    <property type="project" value="UniProtKB-SubCell"/>
</dbReference>
<dbReference type="GO" id="GO:0003700">
    <property type="term" value="F:DNA-binding transcription factor activity"/>
    <property type="evidence" value="ECO:0000250"/>
    <property type="project" value="TAIR"/>
</dbReference>
<dbReference type="GO" id="GO:0000976">
    <property type="term" value="F:transcription cis-regulatory region binding"/>
    <property type="evidence" value="ECO:0000353"/>
    <property type="project" value="TAIR"/>
</dbReference>
<dbReference type="GO" id="GO:0006952">
    <property type="term" value="P:defense response"/>
    <property type="evidence" value="ECO:0007669"/>
    <property type="project" value="UniProtKB-KW"/>
</dbReference>
<dbReference type="GO" id="GO:0009873">
    <property type="term" value="P:ethylene-activated signaling pathway"/>
    <property type="evidence" value="ECO:0000304"/>
    <property type="project" value="TAIR"/>
</dbReference>
<dbReference type="GO" id="GO:0019760">
    <property type="term" value="P:glucosinolate metabolic process"/>
    <property type="evidence" value="ECO:0000315"/>
    <property type="project" value="TAIR"/>
</dbReference>
<dbReference type="CDD" id="cd00018">
    <property type="entry name" value="AP2"/>
    <property type="match status" value="1"/>
</dbReference>
<dbReference type="FunFam" id="3.30.730.10:FF:000001">
    <property type="entry name" value="Ethylene-responsive transcription factor 2"/>
    <property type="match status" value="1"/>
</dbReference>
<dbReference type="Gene3D" id="3.30.730.10">
    <property type="entry name" value="AP2/ERF domain"/>
    <property type="match status" value="1"/>
</dbReference>
<dbReference type="InterPro" id="IPR001471">
    <property type="entry name" value="AP2/ERF_dom"/>
</dbReference>
<dbReference type="InterPro" id="IPR036955">
    <property type="entry name" value="AP2/ERF_dom_sf"/>
</dbReference>
<dbReference type="InterPro" id="IPR016177">
    <property type="entry name" value="DNA-bd_dom_sf"/>
</dbReference>
<dbReference type="PANTHER" id="PTHR31677">
    <property type="entry name" value="AP2 DOMAIN CLASS TRANSCRIPTION FACTOR"/>
    <property type="match status" value="1"/>
</dbReference>
<dbReference type="PANTHER" id="PTHR31677:SF228">
    <property type="entry name" value="ETHYLENE-RESPONSIVE TRANSCRIPTION FACTOR 10-RELATED"/>
    <property type="match status" value="1"/>
</dbReference>
<dbReference type="Pfam" id="PF00847">
    <property type="entry name" value="AP2"/>
    <property type="match status" value="1"/>
</dbReference>
<dbReference type="PRINTS" id="PR00367">
    <property type="entry name" value="ETHRSPELEMNT"/>
</dbReference>
<dbReference type="SMART" id="SM00380">
    <property type="entry name" value="AP2"/>
    <property type="match status" value="1"/>
</dbReference>
<dbReference type="SUPFAM" id="SSF54171">
    <property type="entry name" value="DNA-binding domain"/>
    <property type="match status" value="1"/>
</dbReference>
<dbReference type="PROSITE" id="PS51032">
    <property type="entry name" value="AP2_ERF"/>
    <property type="match status" value="1"/>
</dbReference>